<keyword id="KW-1185">Reference proteome</keyword>
<feature type="chain" id="PRO_0000223085" description="Uncharacterized protein ECU03_0120">
    <location>
        <begin position="1"/>
        <end position="276"/>
    </location>
</feature>
<sequence>MKVTIDVTGKKKDERQDNEKQSVIYPVVKNEKEASVSEGKPAAVIDSILLLSTILVAWILHPISKKIFGNFLLHIVGWGNLGYLVFSTISNLFSRSLESEDDSVLEAEDIEDIVAIITLLLHLFTFVFLVVNRFVVNGTINKLSNAIVCNPLGIYFASSNFLEAQKALKFQKPYHISYIILKATFIIGAAVSFDYDKDINRGILMRFFLLFFLGIILFIVEDYVISMFKISKEKITSFRVFMNIILVVAYTVAGYYMMNRIFLQESVCSNSSNKVV</sequence>
<evidence type="ECO:0000305" key="1"/>
<organism>
    <name type="scientific">Encephalitozoon cuniculi (strain GB-M1)</name>
    <name type="common">Microsporidian parasite</name>
    <dbReference type="NCBI Taxonomy" id="284813"/>
    <lineage>
        <taxon>Eukaryota</taxon>
        <taxon>Fungi</taxon>
        <taxon>Fungi incertae sedis</taxon>
        <taxon>Microsporidia</taxon>
        <taxon>Unikaryonidae</taxon>
        <taxon>Encephalitozoon</taxon>
    </lineage>
</organism>
<protein>
    <recommendedName>
        <fullName>Uncharacterized protein ECU03_0120</fullName>
    </recommendedName>
</protein>
<gene>
    <name type="ordered locus">ECU03_0120</name>
</gene>
<name>Y312_ENCCU</name>
<reference key="1">
    <citation type="journal article" date="2001" name="Nature">
        <title>Genome sequence and gene compaction of the eukaryote parasite Encephalitozoon cuniculi.</title>
        <authorList>
            <person name="Katinka M.D."/>
            <person name="Duprat S."/>
            <person name="Cornillot E."/>
            <person name="Metenier G."/>
            <person name="Thomarat F."/>
            <person name="Prensier G."/>
            <person name="Barbe V."/>
            <person name="Peyretaillade E."/>
            <person name="Brottier P."/>
            <person name="Wincker P."/>
            <person name="Delbac F."/>
            <person name="El Alaoui H."/>
            <person name="Peyret P."/>
            <person name="Saurin W."/>
            <person name="Gouy M."/>
            <person name="Weissenbach J."/>
            <person name="Vivares C.P."/>
        </authorList>
    </citation>
    <scope>NUCLEOTIDE SEQUENCE [LARGE SCALE GENOMIC DNA]</scope>
    <source>
        <strain>GB-M1</strain>
    </source>
</reference>
<comment type="similarity">
    <text evidence="1">To E.cuniculi ECU05_1600/ECU11_0130.</text>
</comment>
<proteinExistence type="predicted"/>
<dbReference type="EMBL" id="AL590443">
    <property type="protein sequence ID" value="CAD26159.1"/>
    <property type="molecule type" value="Genomic_DNA"/>
</dbReference>
<dbReference type="RefSeq" id="NP_597524.1">
    <property type="nucleotide sequence ID" value="NM_001040888.1"/>
</dbReference>
<dbReference type="GeneID" id="858686"/>
<dbReference type="KEGG" id="ecu:ECU03_0120"/>
<dbReference type="VEuPathDB" id="MicrosporidiaDB:ECU03_0120"/>
<dbReference type="HOGENOM" id="CLU_1008411_0_0_1"/>
<dbReference type="InParanoid" id="Q8SW75"/>
<dbReference type="Proteomes" id="UP000000819">
    <property type="component" value="Chromosome III"/>
</dbReference>
<accession>Q8SW75</accession>